<keyword id="KW-0997">Cell inner membrane</keyword>
<keyword id="KW-1003">Cell membrane</keyword>
<keyword id="KW-0406">Ion transport</keyword>
<keyword id="KW-0472">Membrane</keyword>
<keyword id="KW-0520">NAD</keyword>
<keyword id="KW-0915">Sodium</keyword>
<keyword id="KW-0739">Sodium transport</keyword>
<keyword id="KW-1278">Translocase</keyword>
<keyword id="KW-0812">Transmembrane</keyword>
<keyword id="KW-1133">Transmembrane helix</keyword>
<keyword id="KW-0813">Transport</keyword>
<keyword id="KW-0830">Ubiquinone</keyword>
<comment type="function">
    <text evidence="1">NQR complex catalyzes the reduction of ubiquinone-1 to ubiquinol by two successive reactions, coupled with the transport of Na(+) ions from the cytoplasm to the periplasm. NqrA to NqrE are probably involved in the second step, the conversion of ubisemiquinone to ubiquinol.</text>
</comment>
<comment type="catalytic activity">
    <reaction evidence="1">
        <text>a ubiquinone + n Na(+)(in) + NADH + H(+) = a ubiquinol + n Na(+)(out) + NAD(+)</text>
        <dbReference type="Rhea" id="RHEA:47748"/>
        <dbReference type="Rhea" id="RHEA-COMP:9565"/>
        <dbReference type="Rhea" id="RHEA-COMP:9566"/>
        <dbReference type="ChEBI" id="CHEBI:15378"/>
        <dbReference type="ChEBI" id="CHEBI:16389"/>
        <dbReference type="ChEBI" id="CHEBI:17976"/>
        <dbReference type="ChEBI" id="CHEBI:29101"/>
        <dbReference type="ChEBI" id="CHEBI:57540"/>
        <dbReference type="ChEBI" id="CHEBI:57945"/>
        <dbReference type="EC" id="7.2.1.1"/>
    </reaction>
</comment>
<comment type="subunit">
    <text evidence="1">Composed of six subunits; NqrA, NqrB, NqrC, NqrD, NqrE and NqrF.</text>
</comment>
<comment type="subcellular location">
    <subcellularLocation>
        <location evidence="1">Cell inner membrane</location>
        <topology evidence="1">Multi-pass membrane protein</topology>
    </subcellularLocation>
</comment>
<comment type="similarity">
    <text evidence="1">Belongs to the NqrDE/RnfAE family.</text>
</comment>
<reference key="1">
    <citation type="submission" date="2007-05" db="EMBL/GenBank/DDBJ databases">
        <title>Complete sequence of chromosome of Psychrobacter sp. PRwf-1.</title>
        <authorList>
            <consortium name="US DOE Joint Genome Institute"/>
            <person name="Copeland A."/>
            <person name="Lucas S."/>
            <person name="Lapidus A."/>
            <person name="Barry K."/>
            <person name="Detter J.C."/>
            <person name="Glavina del Rio T."/>
            <person name="Hammon N."/>
            <person name="Israni S."/>
            <person name="Dalin E."/>
            <person name="Tice H."/>
            <person name="Pitluck S."/>
            <person name="Chain P."/>
            <person name="Malfatti S."/>
            <person name="Shin M."/>
            <person name="Vergez L."/>
            <person name="Schmutz J."/>
            <person name="Larimer F."/>
            <person name="Land M."/>
            <person name="Hauser L."/>
            <person name="Kyrpides N."/>
            <person name="Kim E."/>
            <person name="Tiedje J."/>
            <person name="Richardson P."/>
        </authorList>
    </citation>
    <scope>NUCLEOTIDE SEQUENCE [LARGE SCALE GENOMIC DNA]</scope>
    <source>
        <strain>PRwf-1</strain>
    </source>
</reference>
<sequence length="202" mass="21694">MGHYVSLFITSVFIENMALAYFLGMCTFLAVSKKVSTAIGLGVAVIVVMSITVPLNNLLFQFILKNGALAWAGFPDIDLSFLGLLSYIALIAATVQILEMFLDKFVPSLYNALGVFLPLITVNCAIMGGVLFMVERDYNFTESLTYGVGAGFGWALAIALLAGIREKLKYSDVPAPLRGLGITFITVGLMSLGFMSFGGMSI</sequence>
<evidence type="ECO:0000255" key="1">
    <source>
        <dbReference type="HAMAP-Rule" id="MF_00429"/>
    </source>
</evidence>
<proteinExistence type="inferred from homology"/>
<name>NQRE_PSYWF</name>
<feature type="chain" id="PRO_1000072310" description="Na(+)-translocating NADH-quinone reductase subunit E">
    <location>
        <begin position="1"/>
        <end position="202"/>
    </location>
</feature>
<feature type="transmembrane region" description="Helical" evidence="1">
    <location>
        <begin position="5"/>
        <end position="25"/>
    </location>
</feature>
<feature type="transmembrane region" description="Helical" evidence="1">
    <location>
        <begin position="35"/>
        <end position="55"/>
    </location>
</feature>
<feature type="transmembrane region" description="Helical" evidence="1">
    <location>
        <begin position="81"/>
        <end position="101"/>
    </location>
</feature>
<feature type="transmembrane region" description="Helical" evidence="1">
    <location>
        <begin position="114"/>
        <end position="134"/>
    </location>
</feature>
<feature type="transmembrane region" description="Helical" evidence="1">
    <location>
        <begin position="144"/>
        <end position="164"/>
    </location>
</feature>
<feature type="transmembrane region" description="Helical" evidence="1">
    <location>
        <begin position="180"/>
        <end position="200"/>
    </location>
</feature>
<organism>
    <name type="scientific">Psychrobacter sp. (strain PRwf-1)</name>
    <dbReference type="NCBI Taxonomy" id="349106"/>
    <lineage>
        <taxon>Bacteria</taxon>
        <taxon>Pseudomonadati</taxon>
        <taxon>Pseudomonadota</taxon>
        <taxon>Gammaproteobacteria</taxon>
        <taxon>Moraxellales</taxon>
        <taxon>Moraxellaceae</taxon>
        <taxon>Psychrobacter</taxon>
    </lineage>
</organism>
<gene>
    <name evidence="1" type="primary">nqrE</name>
    <name type="ordered locus">PsycPRwf_0096</name>
</gene>
<protein>
    <recommendedName>
        <fullName evidence="1">Na(+)-translocating NADH-quinone reductase subunit E</fullName>
        <shortName evidence="1">Na(+)-NQR subunit E</shortName>
        <shortName evidence="1">Na(+)-translocating NQR subunit E</shortName>
        <ecNumber evidence="1">7.2.1.1</ecNumber>
    </recommendedName>
    <alternativeName>
        <fullName evidence="1">NQR complex subunit E</fullName>
    </alternativeName>
    <alternativeName>
        <fullName evidence="1">NQR-1 subunit E</fullName>
    </alternativeName>
</protein>
<dbReference type="EC" id="7.2.1.1" evidence="1"/>
<dbReference type="EMBL" id="CP000713">
    <property type="protein sequence ID" value="ABQ93056.1"/>
    <property type="molecule type" value="Genomic_DNA"/>
</dbReference>
<dbReference type="SMR" id="A5WBL5"/>
<dbReference type="STRING" id="349106.PsycPRwf_0096"/>
<dbReference type="KEGG" id="prw:PsycPRwf_0096"/>
<dbReference type="eggNOG" id="COG2209">
    <property type="taxonomic scope" value="Bacteria"/>
</dbReference>
<dbReference type="HOGENOM" id="CLU_095255_0_0_6"/>
<dbReference type="GO" id="GO:0009276">
    <property type="term" value="C:Gram-negative-bacterium-type cell wall"/>
    <property type="evidence" value="ECO:0007669"/>
    <property type="project" value="InterPro"/>
</dbReference>
<dbReference type="GO" id="GO:0005886">
    <property type="term" value="C:plasma membrane"/>
    <property type="evidence" value="ECO:0007669"/>
    <property type="project" value="UniProtKB-SubCell"/>
</dbReference>
<dbReference type="GO" id="GO:0016655">
    <property type="term" value="F:oxidoreductase activity, acting on NAD(P)H, quinone or similar compound as acceptor"/>
    <property type="evidence" value="ECO:0007669"/>
    <property type="project" value="UniProtKB-UniRule"/>
</dbReference>
<dbReference type="GO" id="GO:0022904">
    <property type="term" value="P:respiratory electron transport chain"/>
    <property type="evidence" value="ECO:0007669"/>
    <property type="project" value="InterPro"/>
</dbReference>
<dbReference type="GO" id="GO:0006814">
    <property type="term" value="P:sodium ion transport"/>
    <property type="evidence" value="ECO:0007669"/>
    <property type="project" value="UniProtKB-UniRule"/>
</dbReference>
<dbReference type="HAMAP" id="MF_00429">
    <property type="entry name" value="NqrE"/>
    <property type="match status" value="1"/>
</dbReference>
<dbReference type="InterPro" id="IPR003667">
    <property type="entry name" value="NqrDE/RnfAE"/>
</dbReference>
<dbReference type="InterPro" id="IPR050133">
    <property type="entry name" value="NqrDE/RnfAE_oxidrdctase"/>
</dbReference>
<dbReference type="InterPro" id="IPR010967">
    <property type="entry name" value="NqrE"/>
</dbReference>
<dbReference type="NCBIfam" id="TIGR01940">
    <property type="entry name" value="nqrE"/>
    <property type="match status" value="1"/>
</dbReference>
<dbReference type="PANTHER" id="PTHR30335">
    <property type="entry name" value="INTEGRAL MEMBRANE PROTEIN OF SOXR-REDUCING COMPLEX"/>
    <property type="match status" value="1"/>
</dbReference>
<dbReference type="PANTHER" id="PTHR30335:SF1">
    <property type="entry name" value="NA(+)-TRANSLOCATING NADH-QUINONE REDUCTASE SUBUNIT E"/>
    <property type="match status" value="1"/>
</dbReference>
<dbReference type="Pfam" id="PF02508">
    <property type="entry name" value="Rnf-Nqr"/>
    <property type="match status" value="1"/>
</dbReference>
<dbReference type="PIRSF" id="PIRSF006102">
    <property type="entry name" value="NQR_DE"/>
    <property type="match status" value="1"/>
</dbReference>
<accession>A5WBL5</accession>